<dbReference type="EC" id="2.5.1.75" evidence="1"/>
<dbReference type="EMBL" id="CP000494">
    <property type="protein sequence ID" value="ABQ38015.1"/>
    <property type="status" value="ALT_INIT"/>
    <property type="molecule type" value="Genomic_DNA"/>
</dbReference>
<dbReference type="RefSeq" id="WP_041750951.1">
    <property type="nucleotide sequence ID" value="NC_009485.1"/>
</dbReference>
<dbReference type="SMR" id="A5EPC1"/>
<dbReference type="STRING" id="288000.BBta_6088"/>
<dbReference type="KEGG" id="bbt:BBta_6088"/>
<dbReference type="eggNOG" id="COG0324">
    <property type="taxonomic scope" value="Bacteria"/>
</dbReference>
<dbReference type="HOGENOM" id="CLU_032616_0_1_5"/>
<dbReference type="OrthoDB" id="9776390at2"/>
<dbReference type="Proteomes" id="UP000000246">
    <property type="component" value="Chromosome"/>
</dbReference>
<dbReference type="GO" id="GO:0005524">
    <property type="term" value="F:ATP binding"/>
    <property type="evidence" value="ECO:0007669"/>
    <property type="project" value="UniProtKB-UniRule"/>
</dbReference>
<dbReference type="GO" id="GO:0052381">
    <property type="term" value="F:tRNA dimethylallyltransferase activity"/>
    <property type="evidence" value="ECO:0007669"/>
    <property type="project" value="UniProtKB-UniRule"/>
</dbReference>
<dbReference type="GO" id="GO:0006400">
    <property type="term" value="P:tRNA modification"/>
    <property type="evidence" value="ECO:0007669"/>
    <property type="project" value="TreeGrafter"/>
</dbReference>
<dbReference type="Gene3D" id="1.10.20.140">
    <property type="match status" value="1"/>
</dbReference>
<dbReference type="Gene3D" id="3.40.50.300">
    <property type="entry name" value="P-loop containing nucleotide triphosphate hydrolases"/>
    <property type="match status" value="1"/>
</dbReference>
<dbReference type="HAMAP" id="MF_00185">
    <property type="entry name" value="IPP_trans"/>
    <property type="match status" value="1"/>
</dbReference>
<dbReference type="InterPro" id="IPR039657">
    <property type="entry name" value="Dimethylallyltransferase"/>
</dbReference>
<dbReference type="InterPro" id="IPR018022">
    <property type="entry name" value="IPT"/>
</dbReference>
<dbReference type="InterPro" id="IPR027417">
    <property type="entry name" value="P-loop_NTPase"/>
</dbReference>
<dbReference type="NCBIfam" id="TIGR00174">
    <property type="entry name" value="miaA"/>
    <property type="match status" value="1"/>
</dbReference>
<dbReference type="PANTHER" id="PTHR11088">
    <property type="entry name" value="TRNA DIMETHYLALLYLTRANSFERASE"/>
    <property type="match status" value="1"/>
</dbReference>
<dbReference type="PANTHER" id="PTHR11088:SF60">
    <property type="entry name" value="TRNA DIMETHYLALLYLTRANSFERASE"/>
    <property type="match status" value="1"/>
</dbReference>
<dbReference type="Pfam" id="PF01715">
    <property type="entry name" value="IPPT"/>
    <property type="match status" value="1"/>
</dbReference>
<dbReference type="SUPFAM" id="SSF52540">
    <property type="entry name" value="P-loop containing nucleoside triphosphate hydrolases"/>
    <property type="match status" value="2"/>
</dbReference>
<protein>
    <recommendedName>
        <fullName evidence="1">tRNA dimethylallyltransferase</fullName>
        <ecNumber evidence="1">2.5.1.75</ecNumber>
    </recommendedName>
    <alternativeName>
        <fullName evidence="1">Dimethylallyl diphosphate:tRNA dimethylallyltransferase</fullName>
        <shortName evidence="1">DMAPP:tRNA dimethylallyltransferase</shortName>
        <shortName evidence="1">DMATase</shortName>
    </alternativeName>
    <alternativeName>
        <fullName evidence="1">Isopentenyl-diphosphate:tRNA isopentenyltransferase</fullName>
        <shortName evidence="1">IPP transferase</shortName>
        <shortName evidence="1">IPPT</shortName>
        <shortName evidence="1">IPTase</shortName>
    </alternativeName>
</protein>
<feature type="chain" id="PRO_0000377091" description="tRNA dimethylallyltransferase">
    <location>
        <begin position="1"/>
        <end position="305"/>
    </location>
</feature>
<feature type="region of interest" description="Interaction with substrate tRNA" evidence="1">
    <location>
        <begin position="39"/>
        <end position="42"/>
    </location>
</feature>
<feature type="binding site" evidence="1">
    <location>
        <begin position="14"/>
        <end position="21"/>
    </location>
    <ligand>
        <name>ATP</name>
        <dbReference type="ChEBI" id="CHEBI:30616"/>
    </ligand>
</feature>
<feature type="binding site" evidence="1">
    <location>
        <begin position="16"/>
        <end position="21"/>
    </location>
    <ligand>
        <name>substrate</name>
    </ligand>
</feature>
<feature type="site" description="Interaction with substrate tRNA" evidence="1">
    <location>
        <position position="105"/>
    </location>
</feature>
<feature type="site" description="Interaction with substrate tRNA" evidence="1">
    <location>
        <position position="127"/>
    </location>
</feature>
<proteinExistence type="inferred from homology"/>
<evidence type="ECO:0000255" key="1">
    <source>
        <dbReference type="HAMAP-Rule" id="MF_00185"/>
    </source>
</evidence>
<evidence type="ECO:0000305" key="2"/>
<keyword id="KW-0067">ATP-binding</keyword>
<keyword id="KW-0460">Magnesium</keyword>
<keyword id="KW-0547">Nucleotide-binding</keyword>
<keyword id="KW-1185">Reference proteome</keyword>
<keyword id="KW-0808">Transferase</keyword>
<keyword id="KW-0819">tRNA processing</keyword>
<reference key="1">
    <citation type="journal article" date="2007" name="Science">
        <title>Legumes symbioses: absence of nod genes in photosynthetic bradyrhizobia.</title>
        <authorList>
            <person name="Giraud E."/>
            <person name="Moulin L."/>
            <person name="Vallenet D."/>
            <person name="Barbe V."/>
            <person name="Cytryn E."/>
            <person name="Avarre J.-C."/>
            <person name="Jaubert M."/>
            <person name="Simon D."/>
            <person name="Cartieaux F."/>
            <person name="Prin Y."/>
            <person name="Bena G."/>
            <person name="Hannibal L."/>
            <person name="Fardoux J."/>
            <person name="Kojadinovic M."/>
            <person name="Vuillet L."/>
            <person name="Lajus A."/>
            <person name="Cruveiller S."/>
            <person name="Rouy Z."/>
            <person name="Mangenot S."/>
            <person name="Segurens B."/>
            <person name="Dossat C."/>
            <person name="Franck W.L."/>
            <person name="Chang W.-S."/>
            <person name="Saunders E."/>
            <person name="Bruce D."/>
            <person name="Richardson P."/>
            <person name="Normand P."/>
            <person name="Dreyfus B."/>
            <person name="Pignol D."/>
            <person name="Stacey G."/>
            <person name="Emerich D."/>
            <person name="Vermeglio A."/>
            <person name="Medigue C."/>
            <person name="Sadowsky M."/>
        </authorList>
    </citation>
    <scope>NUCLEOTIDE SEQUENCE [LARGE SCALE GENOMIC DNA]</scope>
    <source>
        <strain>BTAi1 / ATCC BAA-1182</strain>
    </source>
</reference>
<gene>
    <name evidence="1" type="primary">miaA</name>
    <name type="ordered locus">BBta_6088</name>
</gene>
<name>MIAA_BRASB</name>
<comment type="function">
    <text evidence="1">Catalyzes the transfer of a dimethylallyl group onto the adenine at position 37 in tRNAs that read codons beginning with uridine, leading to the formation of N6-(dimethylallyl)adenosine (i(6)A).</text>
</comment>
<comment type="catalytic activity">
    <reaction evidence="1">
        <text>adenosine(37) in tRNA + dimethylallyl diphosphate = N(6)-dimethylallyladenosine(37) in tRNA + diphosphate</text>
        <dbReference type="Rhea" id="RHEA:26482"/>
        <dbReference type="Rhea" id="RHEA-COMP:10162"/>
        <dbReference type="Rhea" id="RHEA-COMP:10375"/>
        <dbReference type="ChEBI" id="CHEBI:33019"/>
        <dbReference type="ChEBI" id="CHEBI:57623"/>
        <dbReference type="ChEBI" id="CHEBI:74411"/>
        <dbReference type="ChEBI" id="CHEBI:74415"/>
        <dbReference type="EC" id="2.5.1.75"/>
    </reaction>
</comment>
<comment type="cofactor">
    <cofactor evidence="1">
        <name>Mg(2+)</name>
        <dbReference type="ChEBI" id="CHEBI:18420"/>
    </cofactor>
</comment>
<comment type="subunit">
    <text evidence="1">Monomer.</text>
</comment>
<comment type="similarity">
    <text evidence="1">Belongs to the IPP transferase family.</text>
</comment>
<comment type="sequence caution" evidence="2">
    <conflict type="erroneous initiation">
        <sequence resource="EMBL-CDS" id="ABQ38015"/>
    </conflict>
</comment>
<accession>A5EPC1</accession>
<organism>
    <name type="scientific">Bradyrhizobium sp. (strain BTAi1 / ATCC BAA-1182)</name>
    <dbReference type="NCBI Taxonomy" id="288000"/>
    <lineage>
        <taxon>Bacteria</taxon>
        <taxon>Pseudomonadati</taxon>
        <taxon>Pseudomonadota</taxon>
        <taxon>Alphaproteobacteria</taxon>
        <taxon>Hyphomicrobiales</taxon>
        <taxon>Nitrobacteraceae</taxon>
        <taxon>Bradyrhizobium</taxon>
    </lineage>
</organism>
<sequence length="305" mass="33385">MTLPGINKAVLIAGPTASGKSALALELAQKAGGAVINTDSMQVYRDLRVLTARPSLAEEAAVPHRLYGCVDAAVNYSAGHYVRDAKEVLDEVRRGGGLPIFIGGTGLYFKALTRGLSAVPPVPDEVREAVRLRLDRDGVEALHAELARRDAAAAARLNVRDRTRIARALEVIEATGRPLAEWHAETTPPLLPEGSYRALFIAPEREALYARIDARFDAMLADGALEEVARLAARGLDPLLPAMKAHGVPALIRHLRGEITREEAAMIGKADTRHYAKRQFTWFRHQLPEFDWLTPEQARGWVAFL</sequence>